<dbReference type="EMBL" id="CP000282">
    <property type="protein sequence ID" value="ABD83220.1"/>
    <property type="molecule type" value="Genomic_DNA"/>
</dbReference>
<dbReference type="RefSeq" id="WP_011470435.1">
    <property type="nucleotide sequence ID" value="NC_007912.1"/>
</dbReference>
<dbReference type="SMR" id="Q21DK9"/>
<dbReference type="STRING" id="203122.Sde_3965"/>
<dbReference type="GeneID" id="98615558"/>
<dbReference type="KEGG" id="sde:Sde_3965"/>
<dbReference type="eggNOG" id="COG0355">
    <property type="taxonomic scope" value="Bacteria"/>
</dbReference>
<dbReference type="HOGENOM" id="CLU_084338_2_0_6"/>
<dbReference type="OrthoDB" id="9791445at2"/>
<dbReference type="Proteomes" id="UP000001947">
    <property type="component" value="Chromosome"/>
</dbReference>
<dbReference type="GO" id="GO:0005886">
    <property type="term" value="C:plasma membrane"/>
    <property type="evidence" value="ECO:0007669"/>
    <property type="project" value="UniProtKB-SubCell"/>
</dbReference>
<dbReference type="GO" id="GO:0045259">
    <property type="term" value="C:proton-transporting ATP synthase complex"/>
    <property type="evidence" value="ECO:0007669"/>
    <property type="project" value="UniProtKB-KW"/>
</dbReference>
<dbReference type="GO" id="GO:0005524">
    <property type="term" value="F:ATP binding"/>
    <property type="evidence" value="ECO:0007669"/>
    <property type="project" value="UniProtKB-UniRule"/>
</dbReference>
<dbReference type="GO" id="GO:0046933">
    <property type="term" value="F:proton-transporting ATP synthase activity, rotational mechanism"/>
    <property type="evidence" value="ECO:0007669"/>
    <property type="project" value="UniProtKB-UniRule"/>
</dbReference>
<dbReference type="CDD" id="cd12152">
    <property type="entry name" value="F1-ATPase_delta"/>
    <property type="match status" value="1"/>
</dbReference>
<dbReference type="FunFam" id="2.60.15.10:FF:000001">
    <property type="entry name" value="ATP synthase epsilon chain"/>
    <property type="match status" value="1"/>
</dbReference>
<dbReference type="Gene3D" id="2.60.15.10">
    <property type="entry name" value="F0F1 ATP synthase delta/epsilon subunit, N-terminal"/>
    <property type="match status" value="1"/>
</dbReference>
<dbReference type="HAMAP" id="MF_00530">
    <property type="entry name" value="ATP_synth_epsil_bac"/>
    <property type="match status" value="1"/>
</dbReference>
<dbReference type="InterPro" id="IPR036794">
    <property type="entry name" value="ATP_F1_dsu/esu_C_sf"/>
</dbReference>
<dbReference type="InterPro" id="IPR001469">
    <property type="entry name" value="ATP_synth_F1_dsu/esu"/>
</dbReference>
<dbReference type="InterPro" id="IPR020546">
    <property type="entry name" value="ATP_synth_F1_dsu/esu_N"/>
</dbReference>
<dbReference type="InterPro" id="IPR020547">
    <property type="entry name" value="ATP_synth_F1_esu_C"/>
</dbReference>
<dbReference type="InterPro" id="IPR036771">
    <property type="entry name" value="ATPsynth_dsu/esu_N"/>
</dbReference>
<dbReference type="NCBIfam" id="TIGR01216">
    <property type="entry name" value="ATP_synt_epsi"/>
    <property type="match status" value="1"/>
</dbReference>
<dbReference type="NCBIfam" id="NF001847">
    <property type="entry name" value="PRK00571.1-4"/>
    <property type="match status" value="1"/>
</dbReference>
<dbReference type="PANTHER" id="PTHR13822">
    <property type="entry name" value="ATP SYNTHASE DELTA/EPSILON CHAIN"/>
    <property type="match status" value="1"/>
</dbReference>
<dbReference type="PANTHER" id="PTHR13822:SF10">
    <property type="entry name" value="ATP SYNTHASE EPSILON CHAIN, CHLOROPLASTIC"/>
    <property type="match status" value="1"/>
</dbReference>
<dbReference type="Pfam" id="PF00401">
    <property type="entry name" value="ATP-synt_DE"/>
    <property type="match status" value="1"/>
</dbReference>
<dbReference type="Pfam" id="PF02823">
    <property type="entry name" value="ATP-synt_DE_N"/>
    <property type="match status" value="1"/>
</dbReference>
<dbReference type="SUPFAM" id="SSF46604">
    <property type="entry name" value="Epsilon subunit of F1F0-ATP synthase C-terminal domain"/>
    <property type="match status" value="1"/>
</dbReference>
<dbReference type="SUPFAM" id="SSF51344">
    <property type="entry name" value="Epsilon subunit of F1F0-ATP synthase N-terminal domain"/>
    <property type="match status" value="1"/>
</dbReference>
<name>ATPE_SACD2</name>
<sequence length="140" mass="14868">MAMTVHCDIVSAEQEIFSGAIELLVAASVEGDVGINYGHAPLLTALKPGPVRVKKLDGEEEIFYVSGGYLEVQPHVVTVLADTALRAGDMDEAAAEAAMKEAEQAIQSSEGLDYSKAAAQLAESAAQLRTLQAIRKKLQR</sequence>
<comment type="function">
    <text evidence="1">Produces ATP from ADP in the presence of a proton gradient across the membrane.</text>
</comment>
<comment type="subunit">
    <text>F-type ATPases have 2 components, CF(1) - the catalytic core - and CF(0) - the membrane proton channel. CF(1) has five subunits: alpha(3), beta(3), gamma(1), delta(1), epsilon(1). CF(0) has three main subunits: a, b and c.</text>
</comment>
<comment type="subcellular location">
    <subcellularLocation>
        <location evidence="1">Cell inner membrane</location>
        <topology evidence="1">Peripheral membrane protein</topology>
    </subcellularLocation>
</comment>
<comment type="similarity">
    <text evidence="1">Belongs to the ATPase epsilon chain family.</text>
</comment>
<accession>Q21DK9</accession>
<organism>
    <name type="scientific">Saccharophagus degradans (strain 2-40 / ATCC 43961 / DSM 17024)</name>
    <dbReference type="NCBI Taxonomy" id="203122"/>
    <lineage>
        <taxon>Bacteria</taxon>
        <taxon>Pseudomonadati</taxon>
        <taxon>Pseudomonadota</taxon>
        <taxon>Gammaproteobacteria</taxon>
        <taxon>Cellvibrionales</taxon>
        <taxon>Cellvibrionaceae</taxon>
        <taxon>Saccharophagus</taxon>
    </lineage>
</organism>
<proteinExistence type="inferred from homology"/>
<evidence type="ECO:0000255" key="1">
    <source>
        <dbReference type="HAMAP-Rule" id="MF_00530"/>
    </source>
</evidence>
<reference key="1">
    <citation type="journal article" date="2008" name="PLoS Genet.">
        <title>Complete genome sequence of the complex carbohydrate-degrading marine bacterium, Saccharophagus degradans strain 2-40 T.</title>
        <authorList>
            <person name="Weiner R.M."/>
            <person name="Taylor L.E. II"/>
            <person name="Henrissat B."/>
            <person name="Hauser L."/>
            <person name="Land M."/>
            <person name="Coutinho P.M."/>
            <person name="Rancurel C."/>
            <person name="Saunders E.H."/>
            <person name="Longmire A.G."/>
            <person name="Zhang H."/>
            <person name="Bayer E.A."/>
            <person name="Gilbert H.J."/>
            <person name="Larimer F."/>
            <person name="Zhulin I.B."/>
            <person name="Ekborg N.A."/>
            <person name="Lamed R."/>
            <person name="Richardson P.M."/>
            <person name="Borovok I."/>
            <person name="Hutcheson S."/>
        </authorList>
    </citation>
    <scope>NUCLEOTIDE SEQUENCE [LARGE SCALE GENOMIC DNA]</scope>
    <source>
        <strain>2-40 / ATCC 43961 / DSM 17024</strain>
    </source>
</reference>
<gene>
    <name evidence="1" type="primary">atpC</name>
    <name type="ordered locus">Sde_3965</name>
</gene>
<keyword id="KW-0066">ATP synthesis</keyword>
<keyword id="KW-0997">Cell inner membrane</keyword>
<keyword id="KW-1003">Cell membrane</keyword>
<keyword id="KW-0139">CF(1)</keyword>
<keyword id="KW-0375">Hydrogen ion transport</keyword>
<keyword id="KW-0406">Ion transport</keyword>
<keyword id="KW-0472">Membrane</keyword>
<keyword id="KW-1185">Reference proteome</keyword>
<keyword id="KW-0813">Transport</keyword>
<feature type="chain" id="PRO_0000265884" description="ATP synthase epsilon chain">
    <location>
        <begin position="1"/>
        <end position="140"/>
    </location>
</feature>
<protein>
    <recommendedName>
        <fullName evidence="1">ATP synthase epsilon chain</fullName>
    </recommendedName>
    <alternativeName>
        <fullName evidence="1">ATP synthase F1 sector epsilon subunit</fullName>
    </alternativeName>
    <alternativeName>
        <fullName evidence="1">F-ATPase epsilon subunit</fullName>
    </alternativeName>
</protein>